<proteinExistence type="inferred from homology"/>
<comment type="function">
    <text evidence="1">Bifunctional enzyme with both catalase and broad-spectrum peroxidase activity.</text>
</comment>
<comment type="catalytic activity">
    <reaction evidence="1">
        <text>H2O2 + AH2 = A + 2 H2O</text>
        <dbReference type="Rhea" id="RHEA:30275"/>
        <dbReference type="ChEBI" id="CHEBI:13193"/>
        <dbReference type="ChEBI" id="CHEBI:15377"/>
        <dbReference type="ChEBI" id="CHEBI:16240"/>
        <dbReference type="ChEBI" id="CHEBI:17499"/>
        <dbReference type="EC" id="1.11.1.21"/>
    </reaction>
</comment>
<comment type="catalytic activity">
    <reaction evidence="1">
        <text>2 H2O2 = O2 + 2 H2O</text>
        <dbReference type="Rhea" id="RHEA:20309"/>
        <dbReference type="ChEBI" id="CHEBI:15377"/>
        <dbReference type="ChEBI" id="CHEBI:15379"/>
        <dbReference type="ChEBI" id="CHEBI:16240"/>
        <dbReference type="EC" id="1.11.1.21"/>
    </reaction>
</comment>
<comment type="cofactor">
    <cofactor evidence="1">
        <name>heme b</name>
        <dbReference type="ChEBI" id="CHEBI:60344"/>
    </cofactor>
    <text evidence="1">Binds 1 heme b (iron(II)-protoporphyrin IX) group per dimer.</text>
</comment>
<comment type="subunit">
    <text evidence="1">Homodimer or homotetramer.</text>
</comment>
<comment type="PTM">
    <text evidence="1">Formation of the three residue Trp-Tyr-Met cross-link is important for the catalase, but not the peroxidase activity of the enzyme.</text>
</comment>
<comment type="similarity">
    <text evidence="1">Belongs to the peroxidase family. Peroxidase/catalase subfamily.</text>
</comment>
<gene>
    <name evidence="1" type="primary">katG</name>
    <name type="ordered locus">XCC1205</name>
</gene>
<reference key="1">
    <citation type="journal article" date="2002" name="Nature">
        <title>Comparison of the genomes of two Xanthomonas pathogens with differing host specificities.</title>
        <authorList>
            <person name="da Silva A.C.R."/>
            <person name="Ferro J.A."/>
            <person name="Reinach F.C."/>
            <person name="Farah C.S."/>
            <person name="Furlan L.R."/>
            <person name="Quaggio R.B."/>
            <person name="Monteiro-Vitorello C.B."/>
            <person name="Van Sluys M.A."/>
            <person name="Almeida N.F. Jr."/>
            <person name="Alves L.M.C."/>
            <person name="do Amaral A.M."/>
            <person name="Bertolini M.C."/>
            <person name="Camargo L.E.A."/>
            <person name="Camarotte G."/>
            <person name="Cannavan F."/>
            <person name="Cardozo J."/>
            <person name="Chambergo F."/>
            <person name="Ciapina L.P."/>
            <person name="Cicarelli R.M.B."/>
            <person name="Coutinho L.L."/>
            <person name="Cursino-Santos J.R."/>
            <person name="El-Dorry H."/>
            <person name="Faria J.B."/>
            <person name="Ferreira A.J.S."/>
            <person name="Ferreira R.C.C."/>
            <person name="Ferro M.I.T."/>
            <person name="Formighieri E.F."/>
            <person name="Franco M.C."/>
            <person name="Greggio C.C."/>
            <person name="Gruber A."/>
            <person name="Katsuyama A.M."/>
            <person name="Kishi L.T."/>
            <person name="Leite R.P."/>
            <person name="Lemos E.G.M."/>
            <person name="Lemos M.V.F."/>
            <person name="Locali E.C."/>
            <person name="Machado M.A."/>
            <person name="Madeira A.M.B.N."/>
            <person name="Martinez-Rossi N.M."/>
            <person name="Martins E.C."/>
            <person name="Meidanis J."/>
            <person name="Menck C.F.M."/>
            <person name="Miyaki C.Y."/>
            <person name="Moon D.H."/>
            <person name="Moreira L.M."/>
            <person name="Novo M.T.M."/>
            <person name="Okura V.K."/>
            <person name="Oliveira M.C."/>
            <person name="Oliveira V.R."/>
            <person name="Pereira H.A."/>
            <person name="Rossi A."/>
            <person name="Sena J.A.D."/>
            <person name="Silva C."/>
            <person name="de Souza R.F."/>
            <person name="Spinola L.A.F."/>
            <person name="Takita M.A."/>
            <person name="Tamura R.E."/>
            <person name="Teixeira E.C."/>
            <person name="Tezza R.I.D."/>
            <person name="Trindade dos Santos M."/>
            <person name="Truffi D."/>
            <person name="Tsai S.M."/>
            <person name="White F.F."/>
            <person name="Setubal J.C."/>
            <person name="Kitajima J.P."/>
        </authorList>
    </citation>
    <scope>NUCLEOTIDE SEQUENCE [LARGE SCALE GENOMIC DNA]</scope>
    <source>
        <strain>ATCC 33913 / DSM 3586 / NCPPB 528 / LMG 568 / P 25</strain>
    </source>
</reference>
<accession>Q8PBB7</accession>
<protein>
    <recommendedName>
        <fullName evidence="1">Catalase-peroxidase</fullName>
        <shortName evidence="1">CP</shortName>
        <ecNumber evidence="1">1.11.1.21</ecNumber>
    </recommendedName>
    <alternativeName>
        <fullName evidence="1">Peroxidase/catalase</fullName>
    </alternativeName>
</protein>
<organism>
    <name type="scientific">Xanthomonas campestris pv. campestris (strain ATCC 33913 / DSM 3586 / NCPPB 528 / LMG 568 / P 25)</name>
    <dbReference type="NCBI Taxonomy" id="190485"/>
    <lineage>
        <taxon>Bacteria</taxon>
        <taxon>Pseudomonadati</taxon>
        <taxon>Pseudomonadota</taxon>
        <taxon>Gammaproteobacteria</taxon>
        <taxon>Lysobacterales</taxon>
        <taxon>Lysobacteraceae</taxon>
        <taxon>Xanthomonas</taxon>
    </lineage>
</organism>
<keyword id="KW-0349">Heme</keyword>
<keyword id="KW-0376">Hydrogen peroxide</keyword>
<keyword id="KW-0408">Iron</keyword>
<keyword id="KW-0479">Metal-binding</keyword>
<keyword id="KW-0560">Oxidoreductase</keyword>
<keyword id="KW-0575">Peroxidase</keyword>
<keyword id="KW-1185">Reference proteome</keyword>
<name>KATG_XANCP</name>
<dbReference type="EC" id="1.11.1.21" evidence="1"/>
<dbReference type="EMBL" id="AE008922">
    <property type="protein sequence ID" value="AAM40503.1"/>
    <property type="molecule type" value="Genomic_DNA"/>
</dbReference>
<dbReference type="RefSeq" id="NP_636579.1">
    <property type="nucleotide sequence ID" value="NC_003902.1"/>
</dbReference>
<dbReference type="RefSeq" id="WP_011036402.1">
    <property type="nucleotide sequence ID" value="NC_003902.1"/>
</dbReference>
<dbReference type="SMR" id="Q8PBB7"/>
<dbReference type="STRING" id="190485.XCC1205"/>
<dbReference type="EnsemblBacteria" id="AAM40503">
    <property type="protein sequence ID" value="AAM40503"/>
    <property type="gene ID" value="XCC1205"/>
</dbReference>
<dbReference type="KEGG" id="xcc:XCC1205"/>
<dbReference type="PATRIC" id="fig|190485.4.peg.1295"/>
<dbReference type="eggNOG" id="COG0376">
    <property type="taxonomic scope" value="Bacteria"/>
</dbReference>
<dbReference type="HOGENOM" id="CLU_025424_2_0_6"/>
<dbReference type="OrthoDB" id="9759743at2"/>
<dbReference type="Proteomes" id="UP000001010">
    <property type="component" value="Chromosome"/>
</dbReference>
<dbReference type="GO" id="GO:0005829">
    <property type="term" value="C:cytosol"/>
    <property type="evidence" value="ECO:0000318"/>
    <property type="project" value="GO_Central"/>
</dbReference>
<dbReference type="GO" id="GO:0004096">
    <property type="term" value="F:catalase activity"/>
    <property type="evidence" value="ECO:0000318"/>
    <property type="project" value="GO_Central"/>
</dbReference>
<dbReference type="GO" id="GO:0020037">
    <property type="term" value="F:heme binding"/>
    <property type="evidence" value="ECO:0000318"/>
    <property type="project" value="GO_Central"/>
</dbReference>
<dbReference type="GO" id="GO:0046872">
    <property type="term" value="F:metal ion binding"/>
    <property type="evidence" value="ECO:0007669"/>
    <property type="project" value="UniProtKB-KW"/>
</dbReference>
<dbReference type="GO" id="GO:0070301">
    <property type="term" value="P:cellular response to hydrogen peroxide"/>
    <property type="evidence" value="ECO:0000318"/>
    <property type="project" value="GO_Central"/>
</dbReference>
<dbReference type="GO" id="GO:0042744">
    <property type="term" value="P:hydrogen peroxide catabolic process"/>
    <property type="evidence" value="ECO:0000318"/>
    <property type="project" value="GO_Central"/>
</dbReference>
<dbReference type="CDD" id="cd00649">
    <property type="entry name" value="catalase_peroxidase_1"/>
    <property type="match status" value="1"/>
</dbReference>
<dbReference type="CDD" id="cd08200">
    <property type="entry name" value="catalase_peroxidase_2"/>
    <property type="match status" value="1"/>
</dbReference>
<dbReference type="FunFam" id="1.10.420.10:FF:000002">
    <property type="entry name" value="Catalase-peroxidase"/>
    <property type="match status" value="1"/>
</dbReference>
<dbReference type="FunFam" id="1.10.420.10:FF:000004">
    <property type="entry name" value="Catalase-peroxidase"/>
    <property type="match status" value="1"/>
</dbReference>
<dbReference type="FunFam" id="1.10.520.10:FF:000002">
    <property type="entry name" value="Catalase-peroxidase"/>
    <property type="match status" value="1"/>
</dbReference>
<dbReference type="Gene3D" id="1.10.520.10">
    <property type="match status" value="2"/>
</dbReference>
<dbReference type="Gene3D" id="1.10.420.10">
    <property type="entry name" value="Peroxidase, domain 2"/>
    <property type="match status" value="2"/>
</dbReference>
<dbReference type="HAMAP" id="MF_01961">
    <property type="entry name" value="Catal_peroxid"/>
    <property type="match status" value="1"/>
</dbReference>
<dbReference type="InterPro" id="IPR000763">
    <property type="entry name" value="Catalase_peroxidase"/>
</dbReference>
<dbReference type="InterPro" id="IPR002016">
    <property type="entry name" value="Haem_peroxidase"/>
</dbReference>
<dbReference type="InterPro" id="IPR010255">
    <property type="entry name" value="Haem_peroxidase_sf"/>
</dbReference>
<dbReference type="InterPro" id="IPR019794">
    <property type="entry name" value="Peroxidases_AS"/>
</dbReference>
<dbReference type="InterPro" id="IPR019793">
    <property type="entry name" value="Peroxidases_heam-ligand_BS"/>
</dbReference>
<dbReference type="NCBIfam" id="TIGR00198">
    <property type="entry name" value="cat_per_HPI"/>
    <property type="match status" value="1"/>
</dbReference>
<dbReference type="NCBIfam" id="NF011635">
    <property type="entry name" value="PRK15061.1"/>
    <property type="match status" value="1"/>
</dbReference>
<dbReference type="PANTHER" id="PTHR30555:SF0">
    <property type="entry name" value="CATALASE-PEROXIDASE"/>
    <property type="match status" value="1"/>
</dbReference>
<dbReference type="PANTHER" id="PTHR30555">
    <property type="entry name" value="HYDROPEROXIDASE I, BIFUNCTIONAL CATALASE-PEROXIDASE"/>
    <property type="match status" value="1"/>
</dbReference>
<dbReference type="Pfam" id="PF00141">
    <property type="entry name" value="peroxidase"/>
    <property type="match status" value="2"/>
</dbReference>
<dbReference type="PRINTS" id="PR00460">
    <property type="entry name" value="BPEROXIDASE"/>
</dbReference>
<dbReference type="PRINTS" id="PR00458">
    <property type="entry name" value="PEROXIDASE"/>
</dbReference>
<dbReference type="SUPFAM" id="SSF48113">
    <property type="entry name" value="Heme-dependent peroxidases"/>
    <property type="match status" value="2"/>
</dbReference>
<dbReference type="PROSITE" id="PS00435">
    <property type="entry name" value="PEROXIDASE_1"/>
    <property type="match status" value="1"/>
</dbReference>
<dbReference type="PROSITE" id="PS00436">
    <property type="entry name" value="PEROXIDASE_2"/>
    <property type="match status" value="1"/>
</dbReference>
<dbReference type="PROSITE" id="PS50873">
    <property type="entry name" value="PEROXIDASE_4"/>
    <property type="match status" value="1"/>
</dbReference>
<sequence length="748" mass="81593">MTTEAKCPFNHSVVGAGTTNRDWWPKQLRVDLLNQHSARSNPLAASFNYAEAFKRLDLQTLKQELRALMTDSQDWWPADFGHYGPLFVRMAWHSAGTYRTGDGRGGGGRGQQRFAPLNSWPDNVSLDKARRLLWPIKQKYGQAISWADLMILTGNVALESMGFKTFGFAGGREDTWEPDQDLYWGRETKWLGGDDRYAHGSPGVDQAHGVLVKDDDSEVQHTRDLENPLAAVQMGLIYVNPEGPDGNPDPLLAAKDIRDTFGRMAMNDEETVALIAGGHTFGKTHGAADAAHVAAEPEASDLESQGLGWHNSFGSGKGGDTITSGLEVTWTTTPAQWSNDFFDHLFGFEWELSKSPAGAHQWVAKNAQAIIPDAHDASKKRLPTMLTTDLALRIDPAYEAISRRFHANPDQFADAFARAWFKLTHRDMGPRARYLGADVPAEELLWQDPIPALNHALIDAQDAAALKQTVLSSGLSVAQLVATAWASASSFRGSDKRGGANGARIRLAPQKDWASNEPAQLAQVLATLERIQADFNARQSGGKQISLADLIVLGGNAAVEQAAHAAGHAVTVPFAPGRMDASQAQTDVESFAVLEPVADGFRNYAKARYAVSAEALLIDKAQLLTLTAPEMTVLVGGLRVLGANTGQSHNGVFTTRPGVLSNDFFANLLDMRTEWKATSETKETYEGRDRATGEHKWTGTRVDLVFGSNSILRAVAEVYASADAQEKFVQDFVAAWTKVMQLDRFDLA</sequence>
<evidence type="ECO:0000255" key="1">
    <source>
        <dbReference type="HAMAP-Rule" id="MF_01961"/>
    </source>
</evidence>
<feature type="chain" id="PRO_0000354955" description="Catalase-peroxidase">
    <location>
        <begin position="1"/>
        <end position="748"/>
    </location>
</feature>
<feature type="active site" description="Proton acceptor" evidence="1">
    <location>
        <position position="93"/>
    </location>
</feature>
<feature type="binding site" description="axial binding residue" evidence="1">
    <location>
        <position position="279"/>
    </location>
    <ligand>
        <name>heme b</name>
        <dbReference type="ChEBI" id="CHEBI:60344"/>
    </ligand>
    <ligandPart>
        <name>Fe</name>
        <dbReference type="ChEBI" id="CHEBI:18248"/>
    </ligandPart>
</feature>
<feature type="site" description="Transition state stabilizer" evidence="1">
    <location>
        <position position="89"/>
    </location>
</feature>
<feature type="cross-link" description="Tryptophyl-tyrosyl-methioninium (Trp-Tyr) (with M-264)" evidence="1">
    <location>
        <begin position="92"/>
        <end position="238"/>
    </location>
</feature>
<feature type="cross-link" description="Tryptophyl-tyrosyl-methioninium (Tyr-Met) (with W-92)" evidence="1">
    <location>
        <begin position="238"/>
        <end position="264"/>
    </location>
</feature>